<accession>Q976H6</accession>
<accession>F9VMP9</accession>
<reference key="1">
    <citation type="journal article" date="2001" name="DNA Res.">
        <title>Complete genome sequence of an aerobic thermoacidophilic Crenarchaeon, Sulfolobus tokodaii strain7.</title>
        <authorList>
            <person name="Kawarabayasi Y."/>
            <person name="Hino Y."/>
            <person name="Horikawa H."/>
            <person name="Jin-no K."/>
            <person name="Takahashi M."/>
            <person name="Sekine M."/>
            <person name="Baba S."/>
            <person name="Ankai A."/>
            <person name="Kosugi H."/>
            <person name="Hosoyama A."/>
            <person name="Fukui S."/>
            <person name="Nagai Y."/>
            <person name="Nishijima K."/>
            <person name="Otsuka R."/>
            <person name="Nakazawa H."/>
            <person name="Takamiya M."/>
            <person name="Kato Y."/>
            <person name="Yoshizawa T."/>
            <person name="Tanaka T."/>
            <person name="Kudoh Y."/>
            <person name="Yamazaki J."/>
            <person name="Kushida N."/>
            <person name="Oguchi A."/>
            <person name="Aoki K."/>
            <person name="Masuda S."/>
            <person name="Yanagii M."/>
            <person name="Nishimura M."/>
            <person name="Yamagishi A."/>
            <person name="Oshima T."/>
            <person name="Kikuchi H."/>
        </authorList>
    </citation>
    <scope>NUCLEOTIDE SEQUENCE [LARGE SCALE GENOMIC DNA]</scope>
    <source>
        <strain>DSM 16993 / JCM 10545 / NBRC 100140 / 7</strain>
    </source>
</reference>
<evidence type="ECO:0000250" key="1"/>
<evidence type="ECO:0000255" key="2">
    <source>
        <dbReference type="HAMAP-Rule" id="MF_00614"/>
    </source>
</evidence>
<keyword id="KW-0227">DNA damage</keyword>
<keyword id="KW-0234">DNA repair</keyword>
<keyword id="KW-0235">DNA replication</keyword>
<keyword id="KW-0255">Endonuclease</keyword>
<keyword id="KW-0269">Exonuclease</keyword>
<keyword id="KW-0378">Hydrolase</keyword>
<keyword id="KW-0460">Magnesium</keyword>
<keyword id="KW-0479">Metal-binding</keyword>
<keyword id="KW-0540">Nuclease</keyword>
<keyword id="KW-1185">Reference proteome</keyword>
<organism>
    <name type="scientific">Sulfurisphaera tokodaii (strain DSM 16993 / JCM 10545 / NBRC 100140 / 7)</name>
    <name type="common">Sulfolobus tokodaii</name>
    <dbReference type="NCBI Taxonomy" id="273063"/>
    <lineage>
        <taxon>Archaea</taxon>
        <taxon>Thermoproteota</taxon>
        <taxon>Thermoprotei</taxon>
        <taxon>Sulfolobales</taxon>
        <taxon>Sulfolobaceae</taxon>
        <taxon>Sulfurisphaera</taxon>
    </lineage>
</organism>
<protein>
    <recommendedName>
        <fullName evidence="2">Flap endonuclease 1</fullName>
        <shortName evidence="2">FEN-1</shortName>
        <ecNumber evidence="2">3.1.-.-</ecNumber>
    </recommendedName>
    <alternativeName>
        <fullName evidence="2">Flap structure-specific endonuclease 1</fullName>
    </alternativeName>
</protein>
<comment type="function">
    <text evidence="1">Structure-specific nuclease with 5'-flap endonuclease and 5'-3' exonuclease activities involved in DNA replication and repair. During DNA replication, cleaves the 5'-overhanging flap structure that is generated by displacement synthesis when DNA polymerase encounters the 5'-end of a downstream Okazaki fragment. Binds the unpaired 3'-DNA end and kinks the DNA to facilitate 5' cleavage specificity. Cleaves one nucleotide into the double-stranded DNA from the junction in flap DNA, leaving a nick for ligation. Also involved in the base excision repair (BER) pathway. Acts as a genome stabilization factor that prevents flaps from equilibrating into structures that lead to duplications and deletions. Also possesses 5'-3' exonuclease activity on nicked or gapped double-stranded DNA (By similarity).</text>
</comment>
<comment type="cofactor">
    <cofactor evidence="2">
        <name>Mg(2+)</name>
        <dbReference type="ChEBI" id="CHEBI:18420"/>
    </cofactor>
    <text evidence="2">Binds 2 magnesium ions per subunit. They probably participate in the reaction catalyzed by the enzyme. May bind an additional third magnesium ion after substrate binding.</text>
</comment>
<comment type="subunit">
    <text evidence="2">Interacts with PCNA. PCNA stimulates the nuclease activity without altering cleavage specificity.</text>
</comment>
<comment type="similarity">
    <text evidence="2">Belongs to the XPG/RAD2 endonuclease family. FEN1 subfamily.</text>
</comment>
<gene>
    <name evidence="2" type="primary">fen</name>
    <name type="ordered locus">STK_02100</name>
</gene>
<name>FEN_SULTO</name>
<feature type="chain" id="PRO_0000154066" description="Flap endonuclease 1">
    <location>
        <begin position="1"/>
        <end position="351"/>
    </location>
</feature>
<feature type="region of interest" description="N-domain">
    <location>
        <begin position="1"/>
        <end position="98"/>
    </location>
</feature>
<feature type="region of interest" description="I-domain">
    <location>
        <begin position="118"/>
        <end position="260"/>
    </location>
</feature>
<feature type="region of interest" description="Interaction with PCNA" evidence="2">
    <location>
        <begin position="343"/>
        <end position="351"/>
    </location>
</feature>
<feature type="binding site" evidence="2">
    <location>
        <position position="27"/>
    </location>
    <ligand>
        <name>Mg(2+)</name>
        <dbReference type="ChEBI" id="CHEBI:18420"/>
        <label>1</label>
    </ligand>
</feature>
<feature type="binding site" evidence="2">
    <location>
        <position position="80"/>
    </location>
    <ligand>
        <name>Mg(2+)</name>
        <dbReference type="ChEBI" id="CHEBI:18420"/>
        <label>1</label>
    </ligand>
</feature>
<feature type="binding site" evidence="2">
    <location>
        <position position="154"/>
    </location>
    <ligand>
        <name>Mg(2+)</name>
        <dbReference type="ChEBI" id="CHEBI:18420"/>
        <label>1</label>
    </ligand>
</feature>
<feature type="binding site" evidence="2">
    <location>
        <position position="156"/>
    </location>
    <ligand>
        <name>Mg(2+)</name>
        <dbReference type="ChEBI" id="CHEBI:18420"/>
        <label>1</label>
    </ligand>
</feature>
<feature type="binding site" evidence="2">
    <location>
        <position position="175"/>
    </location>
    <ligand>
        <name>Mg(2+)</name>
        <dbReference type="ChEBI" id="CHEBI:18420"/>
        <label>2</label>
    </ligand>
</feature>
<feature type="binding site" evidence="2">
    <location>
        <position position="177"/>
    </location>
    <ligand>
        <name>Mg(2+)</name>
        <dbReference type="ChEBI" id="CHEBI:18420"/>
        <label>2</label>
    </ligand>
</feature>
<feature type="binding site" evidence="2">
    <location>
        <position position="238"/>
    </location>
    <ligand>
        <name>Mg(2+)</name>
        <dbReference type="ChEBI" id="CHEBI:18420"/>
        <label>2</label>
    </ligand>
</feature>
<proteinExistence type="inferred from homology"/>
<dbReference type="EC" id="3.1.-.-" evidence="2"/>
<dbReference type="EMBL" id="BA000023">
    <property type="protein sequence ID" value="BAK54195.1"/>
    <property type="molecule type" value="Genomic_DNA"/>
</dbReference>
<dbReference type="SMR" id="Q976H6"/>
<dbReference type="STRING" id="273063.STK_02100"/>
<dbReference type="KEGG" id="sto:STK_02100"/>
<dbReference type="PATRIC" id="fig|273063.9.peg.259"/>
<dbReference type="eggNOG" id="arCOG04050">
    <property type="taxonomic scope" value="Archaea"/>
</dbReference>
<dbReference type="BRENDA" id="3.1.99.B1">
    <property type="organism ID" value="15396"/>
</dbReference>
<dbReference type="Proteomes" id="UP000001015">
    <property type="component" value="Chromosome"/>
</dbReference>
<dbReference type="GO" id="GO:0008409">
    <property type="term" value="F:5'-3' exonuclease activity"/>
    <property type="evidence" value="ECO:0007669"/>
    <property type="project" value="UniProtKB-UniRule"/>
</dbReference>
<dbReference type="GO" id="GO:0017108">
    <property type="term" value="F:5'-flap endonuclease activity"/>
    <property type="evidence" value="ECO:0007669"/>
    <property type="project" value="UniProtKB-UniRule"/>
</dbReference>
<dbReference type="GO" id="GO:0003677">
    <property type="term" value="F:DNA binding"/>
    <property type="evidence" value="ECO:0007669"/>
    <property type="project" value="UniProtKB-UniRule"/>
</dbReference>
<dbReference type="GO" id="GO:0000287">
    <property type="term" value="F:magnesium ion binding"/>
    <property type="evidence" value="ECO:0007669"/>
    <property type="project" value="UniProtKB-UniRule"/>
</dbReference>
<dbReference type="GO" id="GO:0006281">
    <property type="term" value="P:DNA repair"/>
    <property type="evidence" value="ECO:0007669"/>
    <property type="project" value="UniProtKB-UniRule"/>
</dbReference>
<dbReference type="GO" id="GO:0043137">
    <property type="term" value="P:DNA replication, removal of RNA primer"/>
    <property type="evidence" value="ECO:0007669"/>
    <property type="project" value="UniProtKB-UniRule"/>
</dbReference>
<dbReference type="CDD" id="cd09903">
    <property type="entry name" value="H3TH_FEN1-Arc"/>
    <property type="match status" value="1"/>
</dbReference>
<dbReference type="CDD" id="cd09867">
    <property type="entry name" value="PIN_FEN1"/>
    <property type="match status" value="1"/>
</dbReference>
<dbReference type="FunFam" id="3.40.50.1010:FF:000016">
    <property type="entry name" value="Flap endonuclease 1"/>
    <property type="match status" value="1"/>
</dbReference>
<dbReference type="Gene3D" id="1.10.150.20">
    <property type="entry name" value="5' to 3' exonuclease, C-terminal subdomain"/>
    <property type="match status" value="1"/>
</dbReference>
<dbReference type="Gene3D" id="3.40.50.1010">
    <property type="entry name" value="5'-nuclease"/>
    <property type="match status" value="1"/>
</dbReference>
<dbReference type="HAMAP" id="MF_00614">
    <property type="entry name" value="Fen"/>
    <property type="match status" value="1"/>
</dbReference>
<dbReference type="InterPro" id="IPR036279">
    <property type="entry name" value="5-3_exonuclease_C_sf"/>
</dbReference>
<dbReference type="InterPro" id="IPR023426">
    <property type="entry name" value="Flap_endonuc"/>
</dbReference>
<dbReference type="InterPro" id="IPR019973">
    <property type="entry name" value="Flap_endonuc_arc"/>
</dbReference>
<dbReference type="InterPro" id="IPR008918">
    <property type="entry name" value="HhH2"/>
</dbReference>
<dbReference type="InterPro" id="IPR029060">
    <property type="entry name" value="PIN-like_dom_sf"/>
</dbReference>
<dbReference type="InterPro" id="IPR006086">
    <property type="entry name" value="XPG-I_dom"/>
</dbReference>
<dbReference type="InterPro" id="IPR006084">
    <property type="entry name" value="XPG/Rad2"/>
</dbReference>
<dbReference type="InterPro" id="IPR019974">
    <property type="entry name" value="XPG_CS"/>
</dbReference>
<dbReference type="InterPro" id="IPR006085">
    <property type="entry name" value="XPG_DNA_repair_N"/>
</dbReference>
<dbReference type="NCBIfam" id="TIGR03674">
    <property type="entry name" value="fen_arch"/>
    <property type="match status" value="1"/>
</dbReference>
<dbReference type="PANTHER" id="PTHR11081:SF9">
    <property type="entry name" value="FLAP ENDONUCLEASE 1"/>
    <property type="match status" value="1"/>
</dbReference>
<dbReference type="PANTHER" id="PTHR11081">
    <property type="entry name" value="FLAP ENDONUCLEASE FAMILY MEMBER"/>
    <property type="match status" value="1"/>
</dbReference>
<dbReference type="Pfam" id="PF00867">
    <property type="entry name" value="XPG_I"/>
    <property type="match status" value="1"/>
</dbReference>
<dbReference type="Pfam" id="PF00752">
    <property type="entry name" value="XPG_N"/>
    <property type="match status" value="1"/>
</dbReference>
<dbReference type="PRINTS" id="PR00853">
    <property type="entry name" value="XPGRADSUPER"/>
</dbReference>
<dbReference type="SMART" id="SM00279">
    <property type="entry name" value="HhH2"/>
    <property type="match status" value="1"/>
</dbReference>
<dbReference type="SMART" id="SM00484">
    <property type="entry name" value="XPGI"/>
    <property type="match status" value="1"/>
</dbReference>
<dbReference type="SMART" id="SM00485">
    <property type="entry name" value="XPGN"/>
    <property type="match status" value="1"/>
</dbReference>
<dbReference type="SUPFAM" id="SSF47807">
    <property type="entry name" value="5' to 3' exonuclease, C-terminal subdomain"/>
    <property type="match status" value="1"/>
</dbReference>
<dbReference type="SUPFAM" id="SSF88723">
    <property type="entry name" value="PIN domain-like"/>
    <property type="match status" value="1"/>
</dbReference>
<dbReference type="PROSITE" id="PS00841">
    <property type="entry name" value="XPG_1"/>
    <property type="match status" value="1"/>
</dbReference>
<sequence>MDLAELVEEIKKELSFAELKGKKISIDAYNALYQFLAAIRQPDGTPLMDSQGRVTSHLNGLFYRTISILEEGIIPIYVFDGKPPEQKAQELERRKKVKEEAEKKLEQAKTEGSIKTSELKKYAQMSIRLTNEMAEESKELLKAMGIPVVQAPSEGEAEAAYINILGLSWATASQDYDSLLFGAKRLIRNLTLSGKRKLPGKDVYVEIKPELIELDTLLKKLGLTREQLIDIGIIVGTDYNPDGIKGYGVKTAYRIIKKYGSLEKAIEKGEIPKIKVNFNVEEIRSLFLKPQVVEPKENLELVDCDSNKILDILVKTHDFNEERVKNGIERLEKAKREAKGASRQTGLDQWF</sequence>